<proteinExistence type="inferred from homology"/>
<gene>
    <name evidence="1" type="primary">rlmH</name>
    <name type="ordered locus">WS0156</name>
</gene>
<feature type="chain" id="PRO_0000198211" description="Ribosomal RNA large subunit methyltransferase H">
    <location>
        <begin position="1"/>
        <end position="154"/>
    </location>
</feature>
<feature type="binding site" evidence="1">
    <location>
        <position position="76"/>
    </location>
    <ligand>
        <name>S-adenosyl-L-methionine</name>
        <dbReference type="ChEBI" id="CHEBI:59789"/>
    </ligand>
</feature>
<feature type="binding site" evidence="1">
    <location>
        <position position="103"/>
    </location>
    <ligand>
        <name>S-adenosyl-L-methionine</name>
        <dbReference type="ChEBI" id="CHEBI:59789"/>
    </ligand>
</feature>
<feature type="binding site" evidence="1">
    <location>
        <begin position="122"/>
        <end position="127"/>
    </location>
    <ligand>
        <name>S-adenosyl-L-methionine</name>
        <dbReference type="ChEBI" id="CHEBI:59789"/>
    </ligand>
</feature>
<accession>Q7MST2</accession>
<dbReference type="EC" id="2.1.1.177" evidence="1"/>
<dbReference type="EMBL" id="BX571657">
    <property type="protein sequence ID" value="CAE09319.1"/>
    <property type="molecule type" value="Genomic_DNA"/>
</dbReference>
<dbReference type="RefSeq" id="WP_011138119.1">
    <property type="nucleotide sequence ID" value="NC_005090.1"/>
</dbReference>
<dbReference type="SMR" id="Q7MST2"/>
<dbReference type="STRING" id="273121.WS0156"/>
<dbReference type="KEGG" id="wsu:WS0156"/>
<dbReference type="eggNOG" id="COG1576">
    <property type="taxonomic scope" value="Bacteria"/>
</dbReference>
<dbReference type="HOGENOM" id="CLU_100552_2_1_7"/>
<dbReference type="Proteomes" id="UP000000422">
    <property type="component" value="Chromosome"/>
</dbReference>
<dbReference type="GO" id="GO:0005737">
    <property type="term" value="C:cytoplasm"/>
    <property type="evidence" value="ECO:0007669"/>
    <property type="project" value="UniProtKB-SubCell"/>
</dbReference>
<dbReference type="GO" id="GO:0070038">
    <property type="term" value="F:rRNA (pseudouridine-N3-)-methyltransferase activity"/>
    <property type="evidence" value="ECO:0007669"/>
    <property type="project" value="UniProtKB-UniRule"/>
</dbReference>
<dbReference type="CDD" id="cd18081">
    <property type="entry name" value="RlmH-like"/>
    <property type="match status" value="1"/>
</dbReference>
<dbReference type="Gene3D" id="3.40.1280.10">
    <property type="match status" value="1"/>
</dbReference>
<dbReference type="HAMAP" id="MF_00658">
    <property type="entry name" value="23SrRNA_methyltr_H"/>
    <property type="match status" value="1"/>
</dbReference>
<dbReference type="InterPro" id="IPR029028">
    <property type="entry name" value="Alpha/beta_knot_MTases"/>
</dbReference>
<dbReference type="InterPro" id="IPR003742">
    <property type="entry name" value="RlmH-like"/>
</dbReference>
<dbReference type="InterPro" id="IPR029026">
    <property type="entry name" value="tRNA_m1G_MTases_N"/>
</dbReference>
<dbReference type="NCBIfam" id="NF000987">
    <property type="entry name" value="PRK00103.2-1"/>
    <property type="match status" value="1"/>
</dbReference>
<dbReference type="PANTHER" id="PTHR33603">
    <property type="entry name" value="METHYLTRANSFERASE"/>
    <property type="match status" value="1"/>
</dbReference>
<dbReference type="PANTHER" id="PTHR33603:SF1">
    <property type="entry name" value="RIBOSOMAL RNA LARGE SUBUNIT METHYLTRANSFERASE H"/>
    <property type="match status" value="1"/>
</dbReference>
<dbReference type="Pfam" id="PF02590">
    <property type="entry name" value="SPOUT_MTase"/>
    <property type="match status" value="1"/>
</dbReference>
<dbReference type="PIRSF" id="PIRSF004505">
    <property type="entry name" value="MT_bac"/>
    <property type="match status" value="1"/>
</dbReference>
<dbReference type="SUPFAM" id="SSF75217">
    <property type="entry name" value="alpha/beta knot"/>
    <property type="match status" value="1"/>
</dbReference>
<evidence type="ECO:0000255" key="1">
    <source>
        <dbReference type="HAMAP-Rule" id="MF_00658"/>
    </source>
</evidence>
<organism>
    <name type="scientific">Wolinella succinogenes (strain ATCC 29543 / DSM 1740 / CCUG 13145 / JCM 31913 / LMG 7466 / NCTC 11488 / FDC 602W)</name>
    <name type="common">Vibrio succinogenes</name>
    <dbReference type="NCBI Taxonomy" id="273121"/>
    <lineage>
        <taxon>Bacteria</taxon>
        <taxon>Pseudomonadati</taxon>
        <taxon>Campylobacterota</taxon>
        <taxon>Epsilonproteobacteria</taxon>
        <taxon>Campylobacterales</taxon>
        <taxon>Helicobacteraceae</taxon>
        <taxon>Wolinella</taxon>
    </lineage>
</organism>
<protein>
    <recommendedName>
        <fullName evidence="1">Ribosomal RNA large subunit methyltransferase H</fullName>
        <ecNumber evidence="1">2.1.1.177</ecNumber>
    </recommendedName>
    <alternativeName>
        <fullName evidence="1">23S rRNA (pseudouridine1915-N3)-methyltransferase</fullName>
    </alternativeName>
    <alternativeName>
        <fullName evidence="1">23S rRNA m3Psi1915 methyltransferase</fullName>
    </alternativeName>
    <alternativeName>
        <fullName evidence="1">rRNA (pseudouridine-N3-)-methyltransferase RlmH</fullName>
    </alternativeName>
</protein>
<name>RLMH_WOLSU</name>
<reference key="1">
    <citation type="journal article" date="2003" name="Proc. Natl. Acad. Sci. U.S.A.">
        <title>Complete genome sequence and analysis of Wolinella succinogenes.</title>
        <authorList>
            <person name="Baar C."/>
            <person name="Eppinger M."/>
            <person name="Raddatz G."/>
            <person name="Simon J."/>
            <person name="Lanz C."/>
            <person name="Klimmek O."/>
            <person name="Nandakumar R."/>
            <person name="Gross R."/>
            <person name="Rosinus A."/>
            <person name="Keller H."/>
            <person name="Jagtap P."/>
            <person name="Linke B."/>
            <person name="Meyer F."/>
            <person name="Lederer H."/>
            <person name="Schuster S.C."/>
        </authorList>
    </citation>
    <scope>NUCLEOTIDE SEQUENCE [LARGE SCALE GENOMIC DNA]</scope>
    <source>
        <strain>ATCC 29543 / DSM 1740 / CCUG 13145 / JCM 31913 / LMG 7466 / NCTC 11488 / FDC 602W</strain>
    </source>
</reference>
<sequence>MKIRVYCISKPEKDAYAELGEHFKKLARSFNVELEILDIFNKQIAQAQKAANEAESSLAYKEALQRYLSGAHNIALTPEGKLYDSHAFSQIFHHKQEVNFFIGGAYGFEPGFLKSCHQSLSLSPLTLGHKVAKVVLCEQIYRGLTIMHNHPYHK</sequence>
<comment type="function">
    <text evidence="1">Specifically methylates the pseudouridine at position 1915 (m3Psi1915) in 23S rRNA.</text>
</comment>
<comment type="catalytic activity">
    <reaction evidence="1">
        <text>pseudouridine(1915) in 23S rRNA + S-adenosyl-L-methionine = N(3)-methylpseudouridine(1915) in 23S rRNA + S-adenosyl-L-homocysteine + H(+)</text>
        <dbReference type="Rhea" id="RHEA:42752"/>
        <dbReference type="Rhea" id="RHEA-COMP:10221"/>
        <dbReference type="Rhea" id="RHEA-COMP:10222"/>
        <dbReference type="ChEBI" id="CHEBI:15378"/>
        <dbReference type="ChEBI" id="CHEBI:57856"/>
        <dbReference type="ChEBI" id="CHEBI:59789"/>
        <dbReference type="ChEBI" id="CHEBI:65314"/>
        <dbReference type="ChEBI" id="CHEBI:74486"/>
        <dbReference type="EC" id="2.1.1.177"/>
    </reaction>
</comment>
<comment type="subunit">
    <text evidence="1">Homodimer.</text>
</comment>
<comment type="subcellular location">
    <subcellularLocation>
        <location evidence="1">Cytoplasm</location>
    </subcellularLocation>
</comment>
<comment type="similarity">
    <text evidence="1">Belongs to the RNA methyltransferase RlmH family.</text>
</comment>
<keyword id="KW-0963">Cytoplasm</keyword>
<keyword id="KW-0489">Methyltransferase</keyword>
<keyword id="KW-1185">Reference proteome</keyword>
<keyword id="KW-0698">rRNA processing</keyword>
<keyword id="KW-0949">S-adenosyl-L-methionine</keyword>
<keyword id="KW-0808">Transferase</keyword>